<name>MURC_HYDCU</name>
<organism>
    <name type="scientific">Hydrogenovibrio crunogenus (strain DSM 25203 / XCL-2)</name>
    <name type="common">Thiomicrospira crunogena</name>
    <dbReference type="NCBI Taxonomy" id="317025"/>
    <lineage>
        <taxon>Bacteria</taxon>
        <taxon>Pseudomonadati</taxon>
        <taxon>Pseudomonadota</taxon>
        <taxon>Gammaproteobacteria</taxon>
        <taxon>Thiotrichales</taxon>
        <taxon>Piscirickettsiaceae</taxon>
        <taxon>Hydrogenovibrio</taxon>
    </lineage>
</organism>
<accession>Q31I43</accession>
<dbReference type="EC" id="6.3.2.8" evidence="1"/>
<dbReference type="EMBL" id="CP000109">
    <property type="protein sequence ID" value="ABB41180.1"/>
    <property type="molecule type" value="Genomic_DNA"/>
</dbReference>
<dbReference type="SMR" id="Q31I43"/>
<dbReference type="STRING" id="317025.Tcr_0584"/>
<dbReference type="KEGG" id="tcx:Tcr_0584"/>
<dbReference type="eggNOG" id="COG0773">
    <property type="taxonomic scope" value="Bacteria"/>
</dbReference>
<dbReference type="HOGENOM" id="CLU_028104_2_2_6"/>
<dbReference type="OrthoDB" id="9804126at2"/>
<dbReference type="UniPathway" id="UPA00219"/>
<dbReference type="GO" id="GO:0005737">
    <property type="term" value="C:cytoplasm"/>
    <property type="evidence" value="ECO:0007669"/>
    <property type="project" value="UniProtKB-SubCell"/>
</dbReference>
<dbReference type="GO" id="GO:0005524">
    <property type="term" value="F:ATP binding"/>
    <property type="evidence" value="ECO:0007669"/>
    <property type="project" value="UniProtKB-UniRule"/>
</dbReference>
<dbReference type="GO" id="GO:0008763">
    <property type="term" value="F:UDP-N-acetylmuramate-L-alanine ligase activity"/>
    <property type="evidence" value="ECO:0007669"/>
    <property type="project" value="UniProtKB-UniRule"/>
</dbReference>
<dbReference type="GO" id="GO:0051301">
    <property type="term" value="P:cell division"/>
    <property type="evidence" value="ECO:0007669"/>
    <property type="project" value="UniProtKB-KW"/>
</dbReference>
<dbReference type="GO" id="GO:0071555">
    <property type="term" value="P:cell wall organization"/>
    <property type="evidence" value="ECO:0007669"/>
    <property type="project" value="UniProtKB-KW"/>
</dbReference>
<dbReference type="GO" id="GO:0009252">
    <property type="term" value="P:peptidoglycan biosynthetic process"/>
    <property type="evidence" value="ECO:0007669"/>
    <property type="project" value="UniProtKB-UniRule"/>
</dbReference>
<dbReference type="GO" id="GO:0008360">
    <property type="term" value="P:regulation of cell shape"/>
    <property type="evidence" value="ECO:0007669"/>
    <property type="project" value="UniProtKB-KW"/>
</dbReference>
<dbReference type="FunFam" id="3.40.1190.10:FF:000001">
    <property type="entry name" value="UDP-N-acetylmuramate--L-alanine ligase"/>
    <property type="match status" value="1"/>
</dbReference>
<dbReference type="Gene3D" id="3.90.190.20">
    <property type="entry name" value="Mur ligase, C-terminal domain"/>
    <property type="match status" value="1"/>
</dbReference>
<dbReference type="Gene3D" id="3.40.1190.10">
    <property type="entry name" value="Mur-like, catalytic domain"/>
    <property type="match status" value="1"/>
</dbReference>
<dbReference type="Gene3D" id="3.40.50.720">
    <property type="entry name" value="NAD(P)-binding Rossmann-like Domain"/>
    <property type="match status" value="1"/>
</dbReference>
<dbReference type="HAMAP" id="MF_00046">
    <property type="entry name" value="MurC"/>
    <property type="match status" value="1"/>
</dbReference>
<dbReference type="InterPro" id="IPR036565">
    <property type="entry name" value="Mur-like_cat_sf"/>
</dbReference>
<dbReference type="InterPro" id="IPR004101">
    <property type="entry name" value="Mur_ligase_C"/>
</dbReference>
<dbReference type="InterPro" id="IPR036615">
    <property type="entry name" value="Mur_ligase_C_dom_sf"/>
</dbReference>
<dbReference type="InterPro" id="IPR013221">
    <property type="entry name" value="Mur_ligase_cen"/>
</dbReference>
<dbReference type="InterPro" id="IPR000713">
    <property type="entry name" value="Mur_ligase_N"/>
</dbReference>
<dbReference type="InterPro" id="IPR050061">
    <property type="entry name" value="MurCDEF_pg_biosynth"/>
</dbReference>
<dbReference type="InterPro" id="IPR005758">
    <property type="entry name" value="UDP-N-AcMur_Ala_ligase_MurC"/>
</dbReference>
<dbReference type="NCBIfam" id="TIGR01082">
    <property type="entry name" value="murC"/>
    <property type="match status" value="1"/>
</dbReference>
<dbReference type="PANTHER" id="PTHR43445:SF3">
    <property type="entry name" value="UDP-N-ACETYLMURAMATE--L-ALANINE LIGASE"/>
    <property type="match status" value="1"/>
</dbReference>
<dbReference type="PANTHER" id="PTHR43445">
    <property type="entry name" value="UDP-N-ACETYLMURAMATE--L-ALANINE LIGASE-RELATED"/>
    <property type="match status" value="1"/>
</dbReference>
<dbReference type="Pfam" id="PF01225">
    <property type="entry name" value="Mur_ligase"/>
    <property type="match status" value="1"/>
</dbReference>
<dbReference type="Pfam" id="PF02875">
    <property type="entry name" value="Mur_ligase_C"/>
    <property type="match status" value="1"/>
</dbReference>
<dbReference type="Pfam" id="PF08245">
    <property type="entry name" value="Mur_ligase_M"/>
    <property type="match status" value="1"/>
</dbReference>
<dbReference type="SUPFAM" id="SSF51984">
    <property type="entry name" value="MurCD N-terminal domain"/>
    <property type="match status" value="1"/>
</dbReference>
<dbReference type="SUPFAM" id="SSF53623">
    <property type="entry name" value="MurD-like peptide ligases, catalytic domain"/>
    <property type="match status" value="1"/>
</dbReference>
<dbReference type="SUPFAM" id="SSF53244">
    <property type="entry name" value="MurD-like peptide ligases, peptide-binding domain"/>
    <property type="match status" value="1"/>
</dbReference>
<gene>
    <name evidence="1" type="primary">murC</name>
    <name type="ordered locus">Tcr_0584</name>
</gene>
<proteinExistence type="inferred from homology"/>
<protein>
    <recommendedName>
        <fullName evidence="1">UDP-N-acetylmuramate--L-alanine ligase</fullName>
        <ecNumber evidence="1">6.3.2.8</ecNumber>
    </recommendedName>
    <alternativeName>
        <fullName evidence="1">UDP-N-acetylmuramoyl-L-alanine synthetase</fullName>
    </alternativeName>
</protein>
<comment type="function">
    <text evidence="1">Cell wall formation.</text>
</comment>
<comment type="catalytic activity">
    <reaction evidence="1">
        <text>UDP-N-acetyl-alpha-D-muramate + L-alanine + ATP = UDP-N-acetyl-alpha-D-muramoyl-L-alanine + ADP + phosphate + H(+)</text>
        <dbReference type="Rhea" id="RHEA:23372"/>
        <dbReference type="ChEBI" id="CHEBI:15378"/>
        <dbReference type="ChEBI" id="CHEBI:30616"/>
        <dbReference type="ChEBI" id="CHEBI:43474"/>
        <dbReference type="ChEBI" id="CHEBI:57972"/>
        <dbReference type="ChEBI" id="CHEBI:70757"/>
        <dbReference type="ChEBI" id="CHEBI:83898"/>
        <dbReference type="ChEBI" id="CHEBI:456216"/>
        <dbReference type="EC" id="6.3.2.8"/>
    </reaction>
</comment>
<comment type="pathway">
    <text evidence="1">Cell wall biogenesis; peptidoglycan biosynthesis.</text>
</comment>
<comment type="subcellular location">
    <subcellularLocation>
        <location evidence="1">Cytoplasm</location>
    </subcellularLocation>
</comment>
<comment type="similarity">
    <text evidence="1">Belongs to the MurCDEF family.</text>
</comment>
<feature type="chain" id="PRO_0000242613" description="UDP-N-acetylmuramate--L-alanine ligase">
    <location>
        <begin position="1"/>
        <end position="461"/>
    </location>
</feature>
<feature type="binding site" evidence="1">
    <location>
        <begin position="112"/>
        <end position="118"/>
    </location>
    <ligand>
        <name>ATP</name>
        <dbReference type="ChEBI" id="CHEBI:30616"/>
    </ligand>
</feature>
<evidence type="ECO:0000255" key="1">
    <source>
        <dbReference type="HAMAP-Rule" id="MF_00046"/>
    </source>
</evidence>
<sequence length="461" mass="50674">MKDQVKQIHFVGIGGVGMAGIAEVCLNLGFTVSGSDLKENPTVRHLISLGALIQFNHDASHVKNSDVVVVSTAIAKDNPEVCFAKESRIPVIPRAAMLAELMRMRFGIAIAGTHGKTTTTSLASAILTEGGLDPTFVIGGKLNQFDSNARLGSSQYLIAEADESDASFLHLSPMMSVVTNIDEDHMETYQGDYANLEQTFIEFIHRLPFYGVAIVCIDDQNIQNMLPKLSRKIRTYGFSESADIRATEVLHQGLSMHFNVKANDLPEFSVVLNQPGKHNVLNALAAITVALELDVSIESIQKALAGFGGVGRRFEVYPSRSIGHKNVTLVDDYGHHPTELEATLSTARMAFPEKRLVLVFQPHRYSRTRDLFDEFVQALQHADLLVLLDVYPAGEAPIAAFDSKALLQAMRLRGHKENLHVESQQQLNELTETLLLDDDVVLVMGAGDVGQLARDWKQQAY</sequence>
<reference key="1">
    <citation type="journal article" date="2006" name="PLoS Biol.">
        <title>The genome of deep-sea vent chemolithoautotroph Thiomicrospira crunogena XCL-2.</title>
        <authorList>
            <person name="Scott K.M."/>
            <person name="Sievert S.M."/>
            <person name="Abril F.N."/>
            <person name="Ball L.A."/>
            <person name="Barrett C.J."/>
            <person name="Blake R.A."/>
            <person name="Boller A.J."/>
            <person name="Chain P.S.G."/>
            <person name="Clark J.A."/>
            <person name="Davis C.R."/>
            <person name="Detter C."/>
            <person name="Do K.F."/>
            <person name="Dobrinski K.P."/>
            <person name="Faza B.I."/>
            <person name="Fitzpatrick K.A."/>
            <person name="Freyermuth S.K."/>
            <person name="Harmer T.L."/>
            <person name="Hauser L.J."/>
            <person name="Huegler M."/>
            <person name="Kerfeld C.A."/>
            <person name="Klotz M.G."/>
            <person name="Kong W.W."/>
            <person name="Land M."/>
            <person name="Lapidus A."/>
            <person name="Larimer F.W."/>
            <person name="Longo D.L."/>
            <person name="Lucas S."/>
            <person name="Malfatti S.A."/>
            <person name="Massey S.E."/>
            <person name="Martin D.D."/>
            <person name="McCuddin Z."/>
            <person name="Meyer F."/>
            <person name="Moore J.L."/>
            <person name="Ocampo L.H. Jr."/>
            <person name="Paul J.H."/>
            <person name="Paulsen I.T."/>
            <person name="Reep D.K."/>
            <person name="Ren Q."/>
            <person name="Ross R.L."/>
            <person name="Sato P.Y."/>
            <person name="Thomas P."/>
            <person name="Tinkham L.E."/>
            <person name="Zeruth G.T."/>
        </authorList>
    </citation>
    <scope>NUCLEOTIDE SEQUENCE [LARGE SCALE GENOMIC DNA]</scope>
    <source>
        <strain>DSM 25203 / XCL-2</strain>
    </source>
</reference>
<keyword id="KW-0067">ATP-binding</keyword>
<keyword id="KW-0131">Cell cycle</keyword>
<keyword id="KW-0132">Cell division</keyword>
<keyword id="KW-0133">Cell shape</keyword>
<keyword id="KW-0961">Cell wall biogenesis/degradation</keyword>
<keyword id="KW-0963">Cytoplasm</keyword>
<keyword id="KW-0436">Ligase</keyword>
<keyword id="KW-0547">Nucleotide-binding</keyword>
<keyword id="KW-0573">Peptidoglycan synthesis</keyword>